<protein>
    <recommendedName>
        <fullName>Homeobox protein H2.0</fullName>
    </recommendedName>
</protein>
<name>HMH2_DROME</name>
<reference key="1">
    <citation type="journal article" date="1988" name="EMBO J.">
        <title>A novel, tissue-specific, Drosophila homeobox gene.</title>
        <authorList>
            <person name="Barad M."/>
            <person name="Jack T."/>
            <person name="Chadwick R."/>
            <person name="McGinnis W."/>
        </authorList>
    </citation>
    <scope>NUCLEOTIDE SEQUENCE [MRNA]</scope>
    <scope>FUNCTION</scope>
    <scope>TISSUE SPECIFICITY</scope>
</reference>
<reference key="2">
    <citation type="journal article" date="2000" name="Science">
        <title>The genome sequence of Drosophila melanogaster.</title>
        <authorList>
            <person name="Adams M.D."/>
            <person name="Celniker S.E."/>
            <person name="Holt R.A."/>
            <person name="Evans C.A."/>
            <person name="Gocayne J.D."/>
            <person name="Amanatides P.G."/>
            <person name="Scherer S.E."/>
            <person name="Li P.W."/>
            <person name="Hoskins R.A."/>
            <person name="Galle R.F."/>
            <person name="George R.A."/>
            <person name="Lewis S.E."/>
            <person name="Richards S."/>
            <person name="Ashburner M."/>
            <person name="Henderson S.N."/>
            <person name="Sutton G.G."/>
            <person name="Wortman J.R."/>
            <person name="Yandell M.D."/>
            <person name="Zhang Q."/>
            <person name="Chen L.X."/>
            <person name="Brandon R.C."/>
            <person name="Rogers Y.-H.C."/>
            <person name="Blazej R.G."/>
            <person name="Champe M."/>
            <person name="Pfeiffer B.D."/>
            <person name="Wan K.H."/>
            <person name="Doyle C."/>
            <person name="Baxter E.G."/>
            <person name="Helt G."/>
            <person name="Nelson C.R."/>
            <person name="Miklos G.L.G."/>
            <person name="Abril J.F."/>
            <person name="Agbayani A."/>
            <person name="An H.-J."/>
            <person name="Andrews-Pfannkoch C."/>
            <person name="Baldwin D."/>
            <person name="Ballew R.M."/>
            <person name="Basu A."/>
            <person name="Baxendale J."/>
            <person name="Bayraktaroglu L."/>
            <person name="Beasley E.M."/>
            <person name="Beeson K.Y."/>
            <person name="Benos P.V."/>
            <person name="Berman B.P."/>
            <person name="Bhandari D."/>
            <person name="Bolshakov S."/>
            <person name="Borkova D."/>
            <person name="Botchan M.R."/>
            <person name="Bouck J."/>
            <person name="Brokstein P."/>
            <person name="Brottier P."/>
            <person name="Burtis K.C."/>
            <person name="Busam D.A."/>
            <person name="Butler H."/>
            <person name="Cadieu E."/>
            <person name="Center A."/>
            <person name="Chandra I."/>
            <person name="Cherry J.M."/>
            <person name="Cawley S."/>
            <person name="Dahlke C."/>
            <person name="Davenport L.B."/>
            <person name="Davies P."/>
            <person name="de Pablos B."/>
            <person name="Delcher A."/>
            <person name="Deng Z."/>
            <person name="Mays A.D."/>
            <person name="Dew I."/>
            <person name="Dietz S.M."/>
            <person name="Dodson K."/>
            <person name="Doup L.E."/>
            <person name="Downes M."/>
            <person name="Dugan-Rocha S."/>
            <person name="Dunkov B.C."/>
            <person name="Dunn P."/>
            <person name="Durbin K.J."/>
            <person name="Evangelista C.C."/>
            <person name="Ferraz C."/>
            <person name="Ferriera S."/>
            <person name="Fleischmann W."/>
            <person name="Fosler C."/>
            <person name="Gabrielian A.E."/>
            <person name="Garg N.S."/>
            <person name="Gelbart W.M."/>
            <person name="Glasser K."/>
            <person name="Glodek A."/>
            <person name="Gong F."/>
            <person name="Gorrell J.H."/>
            <person name="Gu Z."/>
            <person name="Guan P."/>
            <person name="Harris M."/>
            <person name="Harris N.L."/>
            <person name="Harvey D.A."/>
            <person name="Heiman T.J."/>
            <person name="Hernandez J.R."/>
            <person name="Houck J."/>
            <person name="Hostin D."/>
            <person name="Houston K.A."/>
            <person name="Howland T.J."/>
            <person name="Wei M.-H."/>
            <person name="Ibegwam C."/>
            <person name="Jalali M."/>
            <person name="Kalush F."/>
            <person name="Karpen G.H."/>
            <person name="Ke Z."/>
            <person name="Kennison J.A."/>
            <person name="Ketchum K.A."/>
            <person name="Kimmel B.E."/>
            <person name="Kodira C.D."/>
            <person name="Kraft C.L."/>
            <person name="Kravitz S."/>
            <person name="Kulp D."/>
            <person name="Lai Z."/>
            <person name="Lasko P."/>
            <person name="Lei Y."/>
            <person name="Levitsky A.A."/>
            <person name="Li J.H."/>
            <person name="Li Z."/>
            <person name="Liang Y."/>
            <person name="Lin X."/>
            <person name="Liu X."/>
            <person name="Mattei B."/>
            <person name="McIntosh T.C."/>
            <person name="McLeod M.P."/>
            <person name="McPherson D."/>
            <person name="Merkulov G."/>
            <person name="Milshina N.V."/>
            <person name="Mobarry C."/>
            <person name="Morris J."/>
            <person name="Moshrefi A."/>
            <person name="Mount S.M."/>
            <person name="Moy M."/>
            <person name="Murphy B."/>
            <person name="Murphy L."/>
            <person name="Muzny D.M."/>
            <person name="Nelson D.L."/>
            <person name="Nelson D.R."/>
            <person name="Nelson K.A."/>
            <person name="Nixon K."/>
            <person name="Nusskern D.R."/>
            <person name="Pacleb J.M."/>
            <person name="Palazzolo M."/>
            <person name="Pittman G.S."/>
            <person name="Pan S."/>
            <person name="Pollard J."/>
            <person name="Puri V."/>
            <person name="Reese M.G."/>
            <person name="Reinert K."/>
            <person name="Remington K."/>
            <person name="Saunders R.D.C."/>
            <person name="Scheeler F."/>
            <person name="Shen H."/>
            <person name="Shue B.C."/>
            <person name="Siden-Kiamos I."/>
            <person name="Simpson M."/>
            <person name="Skupski M.P."/>
            <person name="Smith T.J."/>
            <person name="Spier E."/>
            <person name="Spradling A.C."/>
            <person name="Stapleton M."/>
            <person name="Strong R."/>
            <person name="Sun E."/>
            <person name="Svirskas R."/>
            <person name="Tector C."/>
            <person name="Turner R."/>
            <person name="Venter E."/>
            <person name="Wang A.H."/>
            <person name="Wang X."/>
            <person name="Wang Z.-Y."/>
            <person name="Wassarman D.A."/>
            <person name="Weinstock G.M."/>
            <person name="Weissenbach J."/>
            <person name="Williams S.M."/>
            <person name="Woodage T."/>
            <person name="Worley K.C."/>
            <person name="Wu D."/>
            <person name="Yang S."/>
            <person name="Yao Q.A."/>
            <person name="Ye J."/>
            <person name="Yeh R.-F."/>
            <person name="Zaveri J.S."/>
            <person name="Zhan M."/>
            <person name="Zhang G."/>
            <person name="Zhao Q."/>
            <person name="Zheng L."/>
            <person name="Zheng X.H."/>
            <person name="Zhong F.N."/>
            <person name="Zhong W."/>
            <person name="Zhou X."/>
            <person name="Zhu S.C."/>
            <person name="Zhu X."/>
            <person name="Smith H.O."/>
            <person name="Gibbs R.A."/>
            <person name="Myers E.W."/>
            <person name="Rubin G.M."/>
            <person name="Venter J.C."/>
        </authorList>
    </citation>
    <scope>NUCLEOTIDE SEQUENCE [LARGE SCALE GENOMIC DNA]</scope>
    <source>
        <strain>Berkeley</strain>
    </source>
</reference>
<reference key="3">
    <citation type="journal article" date="2002" name="Genome Biol.">
        <title>Annotation of the Drosophila melanogaster euchromatic genome: a systematic review.</title>
        <authorList>
            <person name="Misra S."/>
            <person name="Crosby M.A."/>
            <person name="Mungall C.J."/>
            <person name="Matthews B.B."/>
            <person name="Campbell K.S."/>
            <person name="Hradecky P."/>
            <person name="Huang Y."/>
            <person name="Kaminker J.S."/>
            <person name="Millburn G.H."/>
            <person name="Prochnik S.E."/>
            <person name="Smith C.D."/>
            <person name="Tupy J.L."/>
            <person name="Whitfield E.J."/>
            <person name="Bayraktaroglu L."/>
            <person name="Berman B.P."/>
            <person name="Bettencourt B.R."/>
            <person name="Celniker S.E."/>
            <person name="de Grey A.D.N.J."/>
            <person name="Drysdale R.A."/>
            <person name="Harris N.L."/>
            <person name="Richter J."/>
            <person name="Russo S."/>
            <person name="Schroeder A.J."/>
            <person name="Shu S.Q."/>
            <person name="Stapleton M."/>
            <person name="Yamada C."/>
            <person name="Ashburner M."/>
            <person name="Gelbart W.M."/>
            <person name="Rubin G.M."/>
            <person name="Lewis S.E."/>
        </authorList>
    </citation>
    <scope>GENOME REANNOTATION</scope>
    <source>
        <strain>Berkeley</strain>
    </source>
</reference>
<reference key="4">
    <citation type="journal article" date="2002" name="Genome Biol.">
        <title>A Drosophila full-length cDNA resource.</title>
        <authorList>
            <person name="Stapleton M."/>
            <person name="Carlson J.W."/>
            <person name="Brokstein P."/>
            <person name="Yu C."/>
            <person name="Champe M."/>
            <person name="George R.A."/>
            <person name="Guarin H."/>
            <person name="Kronmiller B."/>
            <person name="Pacleb J.M."/>
            <person name="Park S."/>
            <person name="Wan K.H."/>
            <person name="Rubin G.M."/>
            <person name="Celniker S.E."/>
        </authorList>
    </citation>
    <scope>NUCLEOTIDE SEQUENCE [LARGE SCALE MRNA]</scope>
    <source>
        <strain>Berkeley</strain>
        <tissue>Embryo</tissue>
    </source>
</reference>
<reference key="5">
    <citation type="submission" date="2006-10" db="EMBL/GenBank/DDBJ databases">
        <authorList>
            <person name="Stapleton M."/>
            <person name="Carlson J.W."/>
            <person name="Frise E."/>
            <person name="Kapadia B."/>
            <person name="Park S."/>
            <person name="Wan K.H."/>
            <person name="Yu C."/>
            <person name="Celniker S.E."/>
        </authorList>
    </citation>
    <scope>NUCLEOTIDE SEQUENCE [LARGE SCALE MRNA]</scope>
    <source>
        <strain>Berkeley</strain>
    </source>
</reference>
<reference key="6">
    <citation type="journal article" date="1991" name="Dev. Genet.">
        <title>Despite expression in embryonic visceral mesoderm, H2.0 is not essential for Drosophila visceral muscle morphogenesis.</title>
        <authorList>
            <person name="Barad M."/>
            <person name="Erlebacher A."/>
            <person name="McGinnis W."/>
        </authorList>
    </citation>
    <scope>FUNCTION</scope>
    <scope>TISSUE SPECIFICITY</scope>
</reference>
<proteinExistence type="evidence at protein level"/>
<organism>
    <name type="scientific">Drosophila melanogaster</name>
    <name type="common">Fruit fly</name>
    <dbReference type="NCBI Taxonomy" id="7227"/>
    <lineage>
        <taxon>Eukaryota</taxon>
        <taxon>Metazoa</taxon>
        <taxon>Ecdysozoa</taxon>
        <taxon>Arthropoda</taxon>
        <taxon>Hexapoda</taxon>
        <taxon>Insecta</taxon>
        <taxon>Pterygota</taxon>
        <taxon>Neoptera</taxon>
        <taxon>Endopterygota</taxon>
        <taxon>Diptera</taxon>
        <taxon>Brachycera</taxon>
        <taxon>Muscomorpha</taxon>
        <taxon>Ephydroidea</taxon>
        <taxon>Drosophilidae</taxon>
        <taxon>Drosophila</taxon>
        <taxon>Sophophora</taxon>
    </lineage>
</organism>
<feature type="chain" id="PRO_0000049064" description="Homeobox protein H2.0">
    <location>
        <begin position="1"/>
        <end position="418"/>
    </location>
</feature>
<feature type="DNA-binding region" description="Homeobox" evidence="1">
    <location>
        <begin position="295"/>
        <end position="354"/>
    </location>
</feature>
<feature type="region of interest" description="Disordered" evidence="2">
    <location>
        <begin position="190"/>
        <end position="223"/>
    </location>
</feature>
<feature type="region of interest" description="Disordered" evidence="2">
    <location>
        <begin position="259"/>
        <end position="296"/>
    </location>
</feature>
<feature type="region of interest" description="Disordered" evidence="2">
    <location>
        <begin position="354"/>
        <end position="418"/>
    </location>
</feature>
<feature type="compositionally biased region" description="Basic residues" evidence="2">
    <location>
        <begin position="190"/>
        <end position="216"/>
    </location>
</feature>
<feature type="compositionally biased region" description="Low complexity" evidence="2">
    <location>
        <begin position="259"/>
        <end position="273"/>
    </location>
</feature>
<feature type="compositionally biased region" description="Low complexity" evidence="2">
    <location>
        <begin position="391"/>
        <end position="403"/>
    </location>
</feature>
<feature type="sequence conflict" description="In Ref. 1; CAA68766." evidence="5" ref="1">
    <original>S</original>
    <variation>T</variation>
    <location>
        <position position="224"/>
    </location>
</feature>
<feature type="sequence conflict" description="In Ref. 4; AAM50996." evidence="5" ref="4">
    <original>T</original>
    <variation>A</variation>
    <location>
        <position position="249"/>
    </location>
</feature>
<feature type="sequence conflict" description="In Ref. 1; CAA68766." evidence="5" ref="1">
    <original>A</original>
    <variation>AA</variation>
    <location>
        <position position="267"/>
    </location>
</feature>
<feature type="sequence conflict" description="In Ref. 1; CAA68766." evidence="5" ref="1">
    <original>T</original>
    <variation>A</variation>
    <location>
        <position position="385"/>
    </location>
</feature>
<accession>P10035</accession>
<accession>Q1LYZ9</accession>
<accession>Q8MS25</accession>
<accession>Q9VMJ3</accession>
<evidence type="ECO:0000255" key="1">
    <source>
        <dbReference type="PROSITE-ProRule" id="PRU00108"/>
    </source>
</evidence>
<evidence type="ECO:0000256" key="2">
    <source>
        <dbReference type="SAM" id="MobiDB-lite"/>
    </source>
</evidence>
<evidence type="ECO:0000269" key="3">
    <source>
    </source>
</evidence>
<evidence type="ECO:0000269" key="4">
    <source>
    </source>
</evidence>
<evidence type="ECO:0000305" key="5"/>
<sequence>MLLHESAASMEQSMPENLSTHMYGECEVNPTLAKCPDPVNVDHELPTKESCASTTIVSTSPTSATSTTKVKLSFSVDRLLGSEPEESHRQSSSSPSTKSCCDGSILACCSFPHCFSQANAESRRFGHATLPPTFTPTSSHTYPFVGLDKLFPGPYMDYKSVLRPTPIRAAEHAAPTYPTLATNALLRFHQHQKQQHQQHHHHQHHPKHLHQQHKPPPHNSTTASALLAPLHSLTSLQLTQQQQRFLGKTPQQLLDIAPTSPAAAAAATSQNGAHGHGGGNGQGNASAGSNGKRKRSWSRAVFSNLQRKGLEIQFQQQKYITKPDRRKLAARLNLTDAQVKVWFQNRRMKWRHTRENLKSGQEKQPSAVPESGGVFKTSTPSGDGTPQEALDYSSDSCSSVDLSEQADEDDNIEINVVE</sequence>
<dbReference type="EMBL" id="Y00843">
    <property type="protein sequence ID" value="CAA68766.1"/>
    <property type="status" value="ALT_INIT"/>
    <property type="molecule type" value="mRNA"/>
</dbReference>
<dbReference type="EMBL" id="AE014134">
    <property type="protein sequence ID" value="AAF52323.2"/>
    <property type="molecule type" value="Genomic_DNA"/>
</dbReference>
<dbReference type="EMBL" id="AY119136">
    <property type="protein sequence ID" value="AAM50996.1"/>
    <property type="molecule type" value="mRNA"/>
</dbReference>
<dbReference type="EMBL" id="BT025227">
    <property type="protein sequence ID" value="ABF17918.1"/>
    <property type="molecule type" value="mRNA"/>
</dbReference>
<dbReference type="PIR" id="S00994">
    <property type="entry name" value="WJFFH2"/>
</dbReference>
<dbReference type="RefSeq" id="NP_523488.2">
    <property type="nucleotide sequence ID" value="NM_078764.3"/>
</dbReference>
<dbReference type="SMR" id="P10035"/>
<dbReference type="BioGRID" id="60006">
    <property type="interactions" value="53"/>
</dbReference>
<dbReference type="IntAct" id="P10035">
    <property type="interactions" value="26"/>
</dbReference>
<dbReference type="STRING" id="7227.FBpp0078858"/>
<dbReference type="GlyGen" id="P10035">
    <property type="glycosylation" value="1 site"/>
</dbReference>
<dbReference type="PaxDb" id="7227-FBpp0078858"/>
<dbReference type="DNASU" id="33841"/>
<dbReference type="EnsemblMetazoa" id="FBtr0079227">
    <property type="protein sequence ID" value="FBpp0078858"/>
    <property type="gene ID" value="FBgn0001170"/>
</dbReference>
<dbReference type="GeneID" id="33841"/>
<dbReference type="KEGG" id="dme:Dmel_CG11607"/>
<dbReference type="AGR" id="FB:FBgn0001170"/>
<dbReference type="CTD" id="33841"/>
<dbReference type="FlyBase" id="FBgn0001170">
    <property type="gene designation" value="H2.0"/>
</dbReference>
<dbReference type="VEuPathDB" id="VectorBase:FBgn0001170"/>
<dbReference type="eggNOG" id="KOG0488">
    <property type="taxonomic scope" value="Eukaryota"/>
</dbReference>
<dbReference type="GeneTree" id="ENSGT00950000183093"/>
<dbReference type="HOGENOM" id="CLU_710319_0_0_1"/>
<dbReference type="InParanoid" id="P10035"/>
<dbReference type="OMA" id="PHCFSQA"/>
<dbReference type="OrthoDB" id="6159439at2759"/>
<dbReference type="PhylomeDB" id="P10035"/>
<dbReference type="SignaLink" id="P10035"/>
<dbReference type="BioGRID-ORCS" id="33841">
    <property type="hits" value="0 hits in 1 CRISPR screen"/>
</dbReference>
<dbReference type="GenomeRNAi" id="33841"/>
<dbReference type="PRO" id="PR:P10035"/>
<dbReference type="Proteomes" id="UP000000803">
    <property type="component" value="Chromosome 2L"/>
</dbReference>
<dbReference type="Bgee" id="FBgn0001170">
    <property type="expression patterns" value="Expressed in visceral mesoderm and 9 other cell types or tissues"/>
</dbReference>
<dbReference type="GO" id="GO:0005634">
    <property type="term" value="C:nucleus"/>
    <property type="evidence" value="ECO:0007669"/>
    <property type="project" value="UniProtKB-SubCell"/>
</dbReference>
<dbReference type="GO" id="GO:0000981">
    <property type="term" value="F:DNA-binding transcription factor activity, RNA polymerase II-specific"/>
    <property type="evidence" value="ECO:0007669"/>
    <property type="project" value="InterPro"/>
</dbReference>
<dbReference type="GO" id="GO:0043565">
    <property type="term" value="F:sequence-specific DNA binding"/>
    <property type="evidence" value="ECO:0000318"/>
    <property type="project" value="GO_Central"/>
</dbReference>
<dbReference type="CDD" id="cd00086">
    <property type="entry name" value="homeodomain"/>
    <property type="match status" value="1"/>
</dbReference>
<dbReference type="Gene3D" id="1.10.10.60">
    <property type="entry name" value="Homeodomain-like"/>
    <property type="match status" value="1"/>
</dbReference>
<dbReference type="InterPro" id="IPR052497">
    <property type="entry name" value="H2.0_Homeobox_TF"/>
</dbReference>
<dbReference type="InterPro" id="IPR001356">
    <property type="entry name" value="HD"/>
</dbReference>
<dbReference type="InterPro" id="IPR020479">
    <property type="entry name" value="HD_metazoa"/>
</dbReference>
<dbReference type="InterPro" id="IPR017970">
    <property type="entry name" value="Homeobox_CS"/>
</dbReference>
<dbReference type="InterPro" id="IPR009057">
    <property type="entry name" value="Homeodomain-like_sf"/>
</dbReference>
<dbReference type="PANTHER" id="PTHR46808">
    <property type="entry name" value="H2.0-LIKE HOMEOBOX PROTEIN"/>
    <property type="match status" value="1"/>
</dbReference>
<dbReference type="PANTHER" id="PTHR46808:SF1">
    <property type="entry name" value="H2.0-LIKE HOMEOBOX PROTEIN"/>
    <property type="match status" value="1"/>
</dbReference>
<dbReference type="Pfam" id="PF00046">
    <property type="entry name" value="Homeodomain"/>
    <property type="match status" value="1"/>
</dbReference>
<dbReference type="PRINTS" id="PR00024">
    <property type="entry name" value="HOMEOBOX"/>
</dbReference>
<dbReference type="SMART" id="SM00389">
    <property type="entry name" value="HOX"/>
    <property type="match status" value="1"/>
</dbReference>
<dbReference type="SUPFAM" id="SSF46689">
    <property type="entry name" value="Homeodomain-like"/>
    <property type="match status" value="1"/>
</dbReference>
<dbReference type="PROSITE" id="PS00027">
    <property type="entry name" value="HOMEOBOX_1"/>
    <property type="match status" value="1"/>
</dbReference>
<dbReference type="PROSITE" id="PS50071">
    <property type="entry name" value="HOMEOBOX_2"/>
    <property type="match status" value="1"/>
</dbReference>
<gene>
    <name type="primary">H2.0</name>
    <name type="ORF">CG11607</name>
</gene>
<comment type="function">
    <text evidence="3 4">May play a role in pattern formation during embryonic and imaginal development. Is not essential for visceral muscle morphogenesis.</text>
</comment>
<comment type="interaction">
    <interactant intactId="EBI-149544">
        <id>P10035</id>
    </interactant>
    <interactant intactId="EBI-148486">
        <id>Q058Z8</id>
        <label>Dmel\CG30324</label>
    </interactant>
    <organismsDiffer>false</organismsDiffer>
    <experiments>4</experiments>
</comment>
<comment type="subcellular location">
    <subcellularLocation>
        <location evidence="1">Nucleus</location>
    </subcellularLocation>
</comment>
<comment type="tissue specificity">
    <text evidence="3 4">Expressed in cells of the visceral musculature and its anlagen.</text>
</comment>
<comment type="similarity">
    <text evidence="5">Belongs to the H2.0 homeobox family.</text>
</comment>
<comment type="sequence caution" evidence="5">
    <conflict type="erroneous initiation">
        <sequence resource="EMBL-CDS" id="CAA68766"/>
    </conflict>
</comment>
<keyword id="KW-0217">Developmental protein</keyword>
<keyword id="KW-0238">DNA-binding</keyword>
<keyword id="KW-0371">Homeobox</keyword>
<keyword id="KW-0539">Nucleus</keyword>
<keyword id="KW-1185">Reference proteome</keyword>